<dbReference type="EMBL" id="AE016819">
    <property type="protein sequence ID" value="AAS53322.1"/>
    <property type="molecule type" value="Genomic_DNA"/>
</dbReference>
<dbReference type="RefSeq" id="NP_985498.1">
    <property type="nucleotide sequence ID" value="NM_210852.1"/>
</dbReference>
<dbReference type="SMR" id="Q754W7"/>
<dbReference type="FunCoup" id="Q754W7">
    <property type="interactions" value="939"/>
</dbReference>
<dbReference type="STRING" id="284811.Q754W7"/>
<dbReference type="EnsemblFungi" id="AAS53322">
    <property type="protein sequence ID" value="AAS53322"/>
    <property type="gene ID" value="AGOS_AFL050W"/>
</dbReference>
<dbReference type="GeneID" id="4621730"/>
<dbReference type="KEGG" id="ago:AGOS_AFL050W"/>
<dbReference type="eggNOG" id="KOG0121">
    <property type="taxonomic scope" value="Eukaryota"/>
</dbReference>
<dbReference type="HOGENOM" id="CLU_070952_1_0_1"/>
<dbReference type="InParanoid" id="Q754W7"/>
<dbReference type="OMA" id="DELRWDH"/>
<dbReference type="OrthoDB" id="201398at2759"/>
<dbReference type="Proteomes" id="UP000000591">
    <property type="component" value="Chromosome VI"/>
</dbReference>
<dbReference type="GO" id="GO:0005846">
    <property type="term" value="C:nuclear cap binding complex"/>
    <property type="evidence" value="ECO:0000318"/>
    <property type="project" value="GO_Central"/>
</dbReference>
<dbReference type="GO" id="GO:0005634">
    <property type="term" value="C:nucleus"/>
    <property type="evidence" value="ECO:0007669"/>
    <property type="project" value="UniProtKB-SubCell"/>
</dbReference>
<dbReference type="GO" id="GO:0000339">
    <property type="term" value="F:RNA cap binding"/>
    <property type="evidence" value="ECO:0000318"/>
    <property type="project" value="GO_Central"/>
</dbReference>
<dbReference type="GO" id="GO:0045292">
    <property type="term" value="P:mRNA cis splicing, via spliceosome"/>
    <property type="evidence" value="ECO:0007669"/>
    <property type="project" value="InterPro"/>
</dbReference>
<dbReference type="GO" id="GO:0000398">
    <property type="term" value="P:mRNA splicing, via spliceosome"/>
    <property type="evidence" value="ECO:0000318"/>
    <property type="project" value="GO_Central"/>
</dbReference>
<dbReference type="GO" id="GO:0051028">
    <property type="term" value="P:mRNA transport"/>
    <property type="evidence" value="ECO:0007669"/>
    <property type="project" value="UniProtKB-KW"/>
</dbReference>
<dbReference type="GO" id="GO:0006364">
    <property type="term" value="P:rRNA processing"/>
    <property type="evidence" value="ECO:0007669"/>
    <property type="project" value="UniProtKB-KW"/>
</dbReference>
<dbReference type="CDD" id="cd12240">
    <property type="entry name" value="RRM_NCBP2"/>
    <property type="match status" value="1"/>
</dbReference>
<dbReference type="FunFam" id="3.30.70.330:FF:000538">
    <property type="entry name" value="Nuclear cap-binding protein subunit 2"/>
    <property type="match status" value="1"/>
</dbReference>
<dbReference type="Gene3D" id="3.30.70.330">
    <property type="match status" value="1"/>
</dbReference>
<dbReference type="InterPro" id="IPR027157">
    <property type="entry name" value="NCBP2"/>
</dbReference>
<dbReference type="InterPro" id="IPR034148">
    <property type="entry name" value="NCBP2_RRM"/>
</dbReference>
<dbReference type="InterPro" id="IPR012677">
    <property type="entry name" value="Nucleotide-bd_a/b_plait_sf"/>
</dbReference>
<dbReference type="InterPro" id="IPR035979">
    <property type="entry name" value="RBD_domain_sf"/>
</dbReference>
<dbReference type="InterPro" id="IPR000504">
    <property type="entry name" value="RRM_dom"/>
</dbReference>
<dbReference type="PANTHER" id="PTHR18847">
    <property type="entry name" value="20 KD NUCLEAR CAP BINDING PROTEIN"/>
    <property type="match status" value="1"/>
</dbReference>
<dbReference type="PANTHER" id="PTHR18847:SF0">
    <property type="entry name" value="NUCLEAR CAP-BINDING PROTEIN SUBUNIT 2"/>
    <property type="match status" value="1"/>
</dbReference>
<dbReference type="Pfam" id="PF00076">
    <property type="entry name" value="RRM_1"/>
    <property type="match status" value="1"/>
</dbReference>
<dbReference type="SMART" id="SM00360">
    <property type="entry name" value="RRM"/>
    <property type="match status" value="1"/>
</dbReference>
<dbReference type="SUPFAM" id="SSF54928">
    <property type="entry name" value="RNA-binding domain, RBD"/>
    <property type="match status" value="1"/>
</dbReference>
<dbReference type="PROSITE" id="PS50102">
    <property type="entry name" value="RRM"/>
    <property type="match status" value="1"/>
</dbReference>
<accession>Q754W7</accession>
<gene>
    <name type="primary">CBC2</name>
    <name type="ordered locus">AFL050W</name>
</gene>
<name>NCBP2_EREGS</name>
<organism>
    <name type="scientific">Eremothecium gossypii (strain ATCC 10895 / CBS 109.51 / FGSC 9923 / NRRL Y-1056)</name>
    <name type="common">Yeast</name>
    <name type="synonym">Ashbya gossypii</name>
    <dbReference type="NCBI Taxonomy" id="284811"/>
    <lineage>
        <taxon>Eukaryota</taxon>
        <taxon>Fungi</taxon>
        <taxon>Dikarya</taxon>
        <taxon>Ascomycota</taxon>
        <taxon>Saccharomycotina</taxon>
        <taxon>Saccharomycetes</taxon>
        <taxon>Saccharomycetales</taxon>
        <taxon>Saccharomycetaceae</taxon>
        <taxon>Eremothecium</taxon>
    </lineage>
</organism>
<sequence>MSLAEFDELRWDHSCDRLDVPSNYLKRKARKTPGGLEELRKSMTSATIYVGNLSFYTSEEQLYELFSKCGSIEKIIMGLDRFKFTPCGFCFIIYQTPQEALAALKYLSKTKLDDREITIDLDPGFEEGRQFGRGKNGGQVSDELRFEFDASRGGFYVPLENRIGAVNHFGARRIRDPHKNHHHHHHGHHHHHGQPHAAAAKVNPMEVEEELDSYIPGQ</sequence>
<feature type="chain" id="PRO_0000232989" description="Nuclear cap-binding protein subunit 2">
    <location>
        <begin position="1"/>
        <end position="218"/>
    </location>
</feature>
<feature type="domain" description="RRM" evidence="2">
    <location>
        <begin position="46"/>
        <end position="124"/>
    </location>
</feature>
<feature type="region of interest" description="Disordered" evidence="3">
    <location>
        <begin position="176"/>
        <end position="200"/>
    </location>
</feature>
<feature type="compositionally biased region" description="Basic residues" evidence="3">
    <location>
        <begin position="176"/>
        <end position="194"/>
    </location>
</feature>
<feature type="binding site" evidence="1">
    <location>
        <position position="24"/>
    </location>
    <ligand>
        <name>mRNA</name>
        <dbReference type="ChEBI" id="CHEBI:33699"/>
    </ligand>
    <ligandPart>
        <name>mRNA cap</name>
    </ligandPart>
</feature>
<feature type="binding site" evidence="1">
    <location>
        <position position="49"/>
    </location>
    <ligand>
        <name>mRNA</name>
        <dbReference type="ChEBI" id="CHEBI:33699"/>
    </ligand>
    <ligandPart>
        <name>mRNA cap</name>
    </ligandPart>
</feature>
<feature type="binding site" evidence="1">
    <location>
        <begin position="118"/>
        <end position="122"/>
    </location>
    <ligand>
        <name>mRNA</name>
        <dbReference type="ChEBI" id="CHEBI:33699"/>
    </ligand>
    <ligandPart>
        <name>mRNA cap</name>
    </ligandPart>
</feature>
<feature type="binding site" evidence="1">
    <location>
        <begin position="129"/>
        <end position="133"/>
    </location>
    <ligand>
        <name>mRNA</name>
        <dbReference type="ChEBI" id="CHEBI:33699"/>
    </ligand>
    <ligandPart>
        <name>mRNA cap</name>
    </ligandPart>
</feature>
<feature type="binding site" evidence="1">
    <location>
        <begin position="139"/>
        <end position="140"/>
    </location>
    <ligand>
        <name>mRNA</name>
        <dbReference type="ChEBI" id="CHEBI:33699"/>
    </ligand>
    <ligandPart>
        <name>mRNA cap</name>
    </ligandPart>
</feature>
<comment type="function">
    <text evidence="1">Component of the cap-binding complex (CBC) involved in the nuclear export of capped U snRNAs. The CBC complex is required for efficient pre-mRNA splicing through efficient commitment complex and spliceosome formation; and involved in rRNA processing at sites A0, A1 and A2 (By similarity).</text>
</comment>
<comment type="subunit">
    <text evidence="1">Component of the nuclear cap-binding complex (CBC).</text>
</comment>
<comment type="subcellular location">
    <subcellularLocation>
        <location evidence="1">Nucleus</location>
    </subcellularLocation>
</comment>
<comment type="similarity">
    <text evidence="4">Belongs to the RRM NCBP2 family.</text>
</comment>
<keyword id="KW-0507">mRNA processing</keyword>
<keyword id="KW-0508">mRNA splicing</keyword>
<keyword id="KW-0509">mRNA transport</keyword>
<keyword id="KW-0539">Nucleus</keyword>
<keyword id="KW-1185">Reference proteome</keyword>
<keyword id="KW-0690">Ribosome biogenesis</keyword>
<keyword id="KW-0694">RNA-binding</keyword>
<keyword id="KW-0698">rRNA processing</keyword>
<keyword id="KW-0813">Transport</keyword>
<proteinExistence type="inferred from homology"/>
<evidence type="ECO:0000250" key="1"/>
<evidence type="ECO:0000255" key="2">
    <source>
        <dbReference type="PROSITE-ProRule" id="PRU00176"/>
    </source>
</evidence>
<evidence type="ECO:0000256" key="3">
    <source>
        <dbReference type="SAM" id="MobiDB-lite"/>
    </source>
</evidence>
<evidence type="ECO:0000305" key="4"/>
<reference key="1">
    <citation type="journal article" date="2004" name="Science">
        <title>The Ashbya gossypii genome as a tool for mapping the ancient Saccharomyces cerevisiae genome.</title>
        <authorList>
            <person name="Dietrich F.S."/>
            <person name="Voegeli S."/>
            <person name="Brachat S."/>
            <person name="Lerch A."/>
            <person name="Gates K."/>
            <person name="Steiner S."/>
            <person name="Mohr C."/>
            <person name="Poehlmann R."/>
            <person name="Luedi P."/>
            <person name="Choi S."/>
            <person name="Wing R.A."/>
            <person name="Flavier A."/>
            <person name="Gaffney T.D."/>
            <person name="Philippsen P."/>
        </authorList>
    </citation>
    <scope>NUCLEOTIDE SEQUENCE [LARGE SCALE GENOMIC DNA]</scope>
    <source>
        <strain>ATCC 10895 / CBS 109.51 / FGSC 9923 / NRRL Y-1056</strain>
    </source>
</reference>
<reference key="2">
    <citation type="journal article" date="2013" name="G3 (Bethesda)">
        <title>Genomes of Ashbya fungi isolated from insects reveal four mating-type loci, numerous translocations, lack of transposons, and distinct gene duplications.</title>
        <authorList>
            <person name="Dietrich F.S."/>
            <person name="Voegeli S."/>
            <person name="Kuo S."/>
            <person name="Philippsen P."/>
        </authorList>
    </citation>
    <scope>GENOME REANNOTATION</scope>
    <source>
        <strain>ATCC 10895 / CBS 109.51 / FGSC 9923 / NRRL Y-1056</strain>
    </source>
</reference>
<protein>
    <recommendedName>
        <fullName>Nuclear cap-binding protein subunit 2</fullName>
    </recommendedName>
    <alternativeName>
        <fullName>20 kDa nuclear cap-binding protein</fullName>
    </alternativeName>
    <alternativeName>
        <fullName>NCBP 20 kDa subunit</fullName>
        <shortName>CBP20</shortName>
    </alternativeName>
</protein>